<comment type="similarity">
    <text evidence="1">Belongs to the UPF0367 family.</text>
</comment>
<reference key="1">
    <citation type="journal article" date="2015" name="Proc. Natl. Acad. Sci. U.S.A.">
        <title>Trichodesmium genome maintains abundant, widespread noncoding DNA in situ, despite oligotrophic lifestyle.</title>
        <authorList>
            <person name="Walworth N."/>
            <person name="Pfreundt U."/>
            <person name="Nelson W.C."/>
            <person name="Mincer T."/>
            <person name="Heidelberg J.F."/>
            <person name="Fu F."/>
            <person name="Waterbury J.B."/>
            <person name="Glavina del Rio T."/>
            <person name="Goodwin L."/>
            <person name="Kyrpides N.C."/>
            <person name="Land M.L."/>
            <person name="Woyke T."/>
            <person name="Hutchins D.A."/>
            <person name="Hess W.R."/>
            <person name="Webb E.A."/>
        </authorList>
    </citation>
    <scope>NUCLEOTIDE SEQUENCE [LARGE SCALE GENOMIC DNA]</scope>
    <source>
        <strain>IMS101</strain>
    </source>
</reference>
<sequence length="88" mass="9541">MFTIDIIVKYTPVPFSIQRKSAEDAESTYEQIVESIRSGNPQILELTCEKIPEKKIAVVMSEVSGVQISQKSGAAATGRPPGFVTVAQ</sequence>
<name>Y1229_TRIEI</name>
<dbReference type="EMBL" id="CP000393">
    <property type="protein sequence ID" value="ABG50580.1"/>
    <property type="molecule type" value="Genomic_DNA"/>
</dbReference>
<dbReference type="RefSeq" id="WP_011610960.1">
    <property type="nucleotide sequence ID" value="NC_008312.1"/>
</dbReference>
<dbReference type="STRING" id="203124.Tery_1229"/>
<dbReference type="KEGG" id="ter:Tery_1229"/>
<dbReference type="eggNOG" id="ENOG5032YB3">
    <property type="taxonomic scope" value="Bacteria"/>
</dbReference>
<dbReference type="HOGENOM" id="CLU_180777_0_0_3"/>
<dbReference type="OrthoDB" id="516864at2"/>
<dbReference type="HAMAP" id="MF_01360">
    <property type="entry name" value="UPF0367"/>
    <property type="match status" value="1"/>
</dbReference>
<dbReference type="InterPro" id="IPR020885">
    <property type="entry name" value="UPF0367"/>
</dbReference>
<dbReference type="NCBIfam" id="NF010236">
    <property type="entry name" value="PRK13683.1"/>
    <property type="match status" value="1"/>
</dbReference>
<accession>Q116J4</accession>
<evidence type="ECO:0000255" key="1">
    <source>
        <dbReference type="HAMAP-Rule" id="MF_01360"/>
    </source>
</evidence>
<proteinExistence type="inferred from homology"/>
<protein>
    <recommendedName>
        <fullName evidence="1">UPF0367 protein Tery_1229</fullName>
    </recommendedName>
</protein>
<gene>
    <name type="ordered locus">Tery_1229</name>
</gene>
<feature type="chain" id="PRO_0000270216" description="UPF0367 protein Tery_1229">
    <location>
        <begin position="1"/>
        <end position="88"/>
    </location>
</feature>
<organism>
    <name type="scientific">Trichodesmium erythraeum (strain IMS101)</name>
    <dbReference type="NCBI Taxonomy" id="203124"/>
    <lineage>
        <taxon>Bacteria</taxon>
        <taxon>Bacillati</taxon>
        <taxon>Cyanobacteriota</taxon>
        <taxon>Cyanophyceae</taxon>
        <taxon>Oscillatoriophycideae</taxon>
        <taxon>Oscillatoriales</taxon>
        <taxon>Microcoleaceae</taxon>
        <taxon>Trichodesmium</taxon>
    </lineage>
</organism>